<feature type="chain" id="PRO_1000019257" description="Enolase">
    <location>
        <begin position="1"/>
        <end position="429"/>
    </location>
</feature>
<feature type="active site" description="Proton donor" evidence="1">
    <location>
        <position position="206"/>
    </location>
</feature>
<feature type="active site" description="Proton acceptor" evidence="1">
    <location>
        <position position="338"/>
    </location>
</feature>
<feature type="binding site" evidence="1">
    <location>
        <position position="164"/>
    </location>
    <ligand>
        <name>(2R)-2-phosphoglycerate</name>
        <dbReference type="ChEBI" id="CHEBI:58289"/>
    </ligand>
</feature>
<feature type="binding site" evidence="1">
    <location>
        <position position="243"/>
    </location>
    <ligand>
        <name>Mg(2+)</name>
        <dbReference type="ChEBI" id="CHEBI:18420"/>
    </ligand>
</feature>
<feature type="binding site" evidence="1">
    <location>
        <position position="286"/>
    </location>
    <ligand>
        <name>Mg(2+)</name>
        <dbReference type="ChEBI" id="CHEBI:18420"/>
    </ligand>
</feature>
<feature type="binding site" evidence="1">
    <location>
        <position position="313"/>
    </location>
    <ligand>
        <name>Mg(2+)</name>
        <dbReference type="ChEBI" id="CHEBI:18420"/>
    </ligand>
</feature>
<feature type="binding site" evidence="1">
    <location>
        <position position="338"/>
    </location>
    <ligand>
        <name>(2R)-2-phosphoglycerate</name>
        <dbReference type="ChEBI" id="CHEBI:58289"/>
    </ligand>
</feature>
<feature type="binding site" evidence="1">
    <location>
        <position position="367"/>
    </location>
    <ligand>
        <name>(2R)-2-phosphoglycerate</name>
        <dbReference type="ChEBI" id="CHEBI:58289"/>
    </ligand>
</feature>
<feature type="binding site" evidence="1">
    <location>
        <position position="368"/>
    </location>
    <ligand>
        <name>(2R)-2-phosphoglycerate</name>
        <dbReference type="ChEBI" id="CHEBI:58289"/>
    </ligand>
</feature>
<feature type="binding site" evidence="1">
    <location>
        <position position="389"/>
    </location>
    <ligand>
        <name>(2R)-2-phosphoglycerate</name>
        <dbReference type="ChEBI" id="CHEBI:58289"/>
    </ligand>
</feature>
<organism>
    <name type="scientific">Thermosipho melanesiensis (strain DSM 12029 / CIP 104789 / BI429)</name>
    <dbReference type="NCBI Taxonomy" id="391009"/>
    <lineage>
        <taxon>Bacteria</taxon>
        <taxon>Thermotogati</taxon>
        <taxon>Thermotogota</taxon>
        <taxon>Thermotogae</taxon>
        <taxon>Thermotogales</taxon>
        <taxon>Fervidobacteriaceae</taxon>
        <taxon>Thermosipho</taxon>
    </lineage>
</organism>
<protein>
    <recommendedName>
        <fullName evidence="1">Enolase</fullName>
        <ecNumber evidence="1">4.2.1.11</ecNumber>
    </recommendedName>
    <alternativeName>
        <fullName evidence="1">2-phospho-D-glycerate hydro-lyase</fullName>
    </alternativeName>
    <alternativeName>
        <fullName evidence="1">2-phosphoglycerate dehydratase</fullName>
    </alternativeName>
</protein>
<comment type="function">
    <text evidence="1">Catalyzes the reversible conversion of 2-phosphoglycerate (2-PG) into phosphoenolpyruvate (PEP). It is essential for the degradation of carbohydrates via glycolysis.</text>
</comment>
<comment type="catalytic activity">
    <reaction evidence="1">
        <text>(2R)-2-phosphoglycerate = phosphoenolpyruvate + H2O</text>
        <dbReference type="Rhea" id="RHEA:10164"/>
        <dbReference type="ChEBI" id="CHEBI:15377"/>
        <dbReference type="ChEBI" id="CHEBI:58289"/>
        <dbReference type="ChEBI" id="CHEBI:58702"/>
        <dbReference type="EC" id="4.2.1.11"/>
    </reaction>
</comment>
<comment type="cofactor">
    <cofactor evidence="1">
        <name>Mg(2+)</name>
        <dbReference type="ChEBI" id="CHEBI:18420"/>
    </cofactor>
    <text evidence="1">Binds a second Mg(2+) ion via substrate during catalysis.</text>
</comment>
<comment type="pathway">
    <text evidence="1">Carbohydrate degradation; glycolysis; pyruvate from D-glyceraldehyde 3-phosphate: step 4/5.</text>
</comment>
<comment type="subcellular location">
    <subcellularLocation>
        <location evidence="1">Cytoplasm</location>
    </subcellularLocation>
    <subcellularLocation>
        <location evidence="1">Secreted</location>
    </subcellularLocation>
    <subcellularLocation>
        <location evidence="1">Cell surface</location>
    </subcellularLocation>
    <text evidence="1">Fractions of enolase are present in both the cytoplasm and on the cell surface.</text>
</comment>
<comment type="similarity">
    <text evidence="1">Belongs to the enolase family.</text>
</comment>
<gene>
    <name evidence="1" type="primary">eno</name>
    <name type="ordered locus">Tmel_0174</name>
</gene>
<sequence length="429" mass="47051">MYIEIIDIYAREVLDSRGNPTVEVEVMLEDGSVGRAIVPSGASTGKFEALELRDKDSKRYGGKGVLKAIENVNEKIAPKLLGLNAYEQVSIDKTLLEIDGTENKSNIGANAILGVSMAVSRAVANSLQLPLYKYLGGVNAKVLPVPLMNVINGGAHADNNLDIQEFMIVPAGAPSFREALRYGAETFHALKRILKEAGHVTAVGDEGGFAPNLQNNEEAIQVLIRAIEKAGYVPGKDIYIALDVAASEFYNGETGKYFIDGTEKTSDELIEYYESLINKYPIISIEDPFDQEDWDSYRKFNEKVGKKVQIVGDDLYVTNVKRLEKGIELKATNSILIKLNQIGSVTETLNAIELAKTNNMTNVISHRSGETEDTFIADLAVATNAGQIKTGSLSRSERIAKYNQLLRIEEELGDAAEYKGIKAFYSIDR</sequence>
<proteinExistence type="inferred from homology"/>
<keyword id="KW-0963">Cytoplasm</keyword>
<keyword id="KW-0324">Glycolysis</keyword>
<keyword id="KW-0456">Lyase</keyword>
<keyword id="KW-0460">Magnesium</keyword>
<keyword id="KW-0479">Metal-binding</keyword>
<keyword id="KW-0964">Secreted</keyword>
<name>ENO_THEM4</name>
<reference key="1">
    <citation type="submission" date="2007-05" db="EMBL/GenBank/DDBJ databases">
        <title>Complete sequence of Thermosipho melanesiensis BI429.</title>
        <authorList>
            <consortium name="US DOE Joint Genome Institute"/>
            <person name="Copeland A."/>
            <person name="Lucas S."/>
            <person name="Lapidus A."/>
            <person name="Barry K."/>
            <person name="Glavina del Rio T."/>
            <person name="Dalin E."/>
            <person name="Tice H."/>
            <person name="Pitluck S."/>
            <person name="Chertkov O."/>
            <person name="Brettin T."/>
            <person name="Bruce D."/>
            <person name="Detter J.C."/>
            <person name="Han C."/>
            <person name="Schmutz J."/>
            <person name="Larimer F."/>
            <person name="Land M."/>
            <person name="Hauser L."/>
            <person name="Kyrpides N."/>
            <person name="Mikhailova N."/>
            <person name="Nelson K."/>
            <person name="Gogarten J.P."/>
            <person name="Noll K."/>
            <person name="Richardson P."/>
        </authorList>
    </citation>
    <scope>NUCLEOTIDE SEQUENCE [LARGE SCALE GENOMIC DNA]</scope>
    <source>
        <strain>DSM 12029 / CIP 104789 / BI429</strain>
    </source>
</reference>
<dbReference type="EC" id="4.2.1.11" evidence="1"/>
<dbReference type="EMBL" id="CP000716">
    <property type="protein sequence ID" value="ABR30051.1"/>
    <property type="molecule type" value="Genomic_DNA"/>
</dbReference>
<dbReference type="RefSeq" id="WP_012056412.1">
    <property type="nucleotide sequence ID" value="NC_009616.1"/>
</dbReference>
<dbReference type="SMR" id="A6LJF0"/>
<dbReference type="STRING" id="391009.Tmel_0174"/>
<dbReference type="KEGG" id="tme:Tmel_0174"/>
<dbReference type="eggNOG" id="COG0148">
    <property type="taxonomic scope" value="Bacteria"/>
</dbReference>
<dbReference type="HOGENOM" id="CLU_031223_2_1_0"/>
<dbReference type="OrthoDB" id="9804716at2"/>
<dbReference type="UniPathway" id="UPA00109">
    <property type="reaction ID" value="UER00187"/>
</dbReference>
<dbReference type="Proteomes" id="UP000001110">
    <property type="component" value="Chromosome"/>
</dbReference>
<dbReference type="GO" id="GO:0009986">
    <property type="term" value="C:cell surface"/>
    <property type="evidence" value="ECO:0007669"/>
    <property type="project" value="UniProtKB-SubCell"/>
</dbReference>
<dbReference type="GO" id="GO:0005576">
    <property type="term" value="C:extracellular region"/>
    <property type="evidence" value="ECO:0007669"/>
    <property type="project" value="UniProtKB-SubCell"/>
</dbReference>
<dbReference type="GO" id="GO:0000015">
    <property type="term" value="C:phosphopyruvate hydratase complex"/>
    <property type="evidence" value="ECO:0007669"/>
    <property type="project" value="InterPro"/>
</dbReference>
<dbReference type="GO" id="GO:0000287">
    <property type="term" value="F:magnesium ion binding"/>
    <property type="evidence" value="ECO:0007669"/>
    <property type="project" value="UniProtKB-UniRule"/>
</dbReference>
<dbReference type="GO" id="GO:0004634">
    <property type="term" value="F:phosphopyruvate hydratase activity"/>
    <property type="evidence" value="ECO:0007669"/>
    <property type="project" value="UniProtKB-UniRule"/>
</dbReference>
<dbReference type="GO" id="GO:0006096">
    <property type="term" value="P:glycolytic process"/>
    <property type="evidence" value="ECO:0007669"/>
    <property type="project" value="UniProtKB-UniRule"/>
</dbReference>
<dbReference type="CDD" id="cd03313">
    <property type="entry name" value="enolase"/>
    <property type="match status" value="1"/>
</dbReference>
<dbReference type="FunFam" id="3.20.20.120:FF:000001">
    <property type="entry name" value="Enolase"/>
    <property type="match status" value="1"/>
</dbReference>
<dbReference type="FunFam" id="3.30.390.10:FF:000001">
    <property type="entry name" value="Enolase"/>
    <property type="match status" value="1"/>
</dbReference>
<dbReference type="Gene3D" id="3.20.20.120">
    <property type="entry name" value="Enolase-like C-terminal domain"/>
    <property type="match status" value="1"/>
</dbReference>
<dbReference type="Gene3D" id="3.30.390.10">
    <property type="entry name" value="Enolase-like, N-terminal domain"/>
    <property type="match status" value="1"/>
</dbReference>
<dbReference type="HAMAP" id="MF_00318">
    <property type="entry name" value="Enolase"/>
    <property type="match status" value="1"/>
</dbReference>
<dbReference type="InterPro" id="IPR000941">
    <property type="entry name" value="Enolase"/>
</dbReference>
<dbReference type="InterPro" id="IPR036849">
    <property type="entry name" value="Enolase-like_C_sf"/>
</dbReference>
<dbReference type="InterPro" id="IPR029017">
    <property type="entry name" value="Enolase-like_N"/>
</dbReference>
<dbReference type="InterPro" id="IPR020810">
    <property type="entry name" value="Enolase_C"/>
</dbReference>
<dbReference type="InterPro" id="IPR020809">
    <property type="entry name" value="Enolase_CS"/>
</dbReference>
<dbReference type="InterPro" id="IPR020811">
    <property type="entry name" value="Enolase_N"/>
</dbReference>
<dbReference type="NCBIfam" id="TIGR01060">
    <property type="entry name" value="eno"/>
    <property type="match status" value="1"/>
</dbReference>
<dbReference type="PANTHER" id="PTHR11902">
    <property type="entry name" value="ENOLASE"/>
    <property type="match status" value="1"/>
</dbReference>
<dbReference type="PANTHER" id="PTHR11902:SF1">
    <property type="entry name" value="ENOLASE"/>
    <property type="match status" value="1"/>
</dbReference>
<dbReference type="Pfam" id="PF00113">
    <property type="entry name" value="Enolase_C"/>
    <property type="match status" value="1"/>
</dbReference>
<dbReference type="Pfam" id="PF03952">
    <property type="entry name" value="Enolase_N"/>
    <property type="match status" value="1"/>
</dbReference>
<dbReference type="PIRSF" id="PIRSF001400">
    <property type="entry name" value="Enolase"/>
    <property type="match status" value="1"/>
</dbReference>
<dbReference type="PRINTS" id="PR00148">
    <property type="entry name" value="ENOLASE"/>
</dbReference>
<dbReference type="SFLD" id="SFLDS00001">
    <property type="entry name" value="Enolase"/>
    <property type="match status" value="1"/>
</dbReference>
<dbReference type="SFLD" id="SFLDF00002">
    <property type="entry name" value="enolase"/>
    <property type="match status" value="1"/>
</dbReference>
<dbReference type="SMART" id="SM01192">
    <property type="entry name" value="Enolase_C"/>
    <property type="match status" value="1"/>
</dbReference>
<dbReference type="SMART" id="SM01193">
    <property type="entry name" value="Enolase_N"/>
    <property type="match status" value="1"/>
</dbReference>
<dbReference type="SUPFAM" id="SSF51604">
    <property type="entry name" value="Enolase C-terminal domain-like"/>
    <property type="match status" value="1"/>
</dbReference>
<dbReference type="SUPFAM" id="SSF54826">
    <property type="entry name" value="Enolase N-terminal domain-like"/>
    <property type="match status" value="1"/>
</dbReference>
<dbReference type="PROSITE" id="PS00164">
    <property type="entry name" value="ENOLASE"/>
    <property type="match status" value="1"/>
</dbReference>
<evidence type="ECO:0000255" key="1">
    <source>
        <dbReference type="HAMAP-Rule" id="MF_00318"/>
    </source>
</evidence>
<accession>A6LJF0</accession>